<protein>
    <recommendedName>
        <fullName evidence="1">DNA primase DnaG</fullName>
        <ecNumber evidence="1">2.7.7.101</ecNumber>
    </recommendedName>
</protein>
<proteinExistence type="inferred from homology"/>
<dbReference type="EC" id="2.7.7.101" evidence="1"/>
<dbReference type="EMBL" id="CP001014">
    <property type="protein sequence ID" value="ACB40248.1"/>
    <property type="molecule type" value="Genomic_DNA"/>
</dbReference>
<dbReference type="RefSeq" id="WP_012350667.1">
    <property type="nucleotide sequence ID" value="NC_010525.1"/>
</dbReference>
<dbReference type="SMR" id="B1Y919"/>
<dbReference type="STRING" id="444157.Tneu_1321"/>
<dbReference type="GeneID" id="6165297"/>
<dbReference type="KEGG" id="tne:Tneu_1321"/>
<dbReference type="eggNOG" id="arCOG04281">
    <property type="taxonomic scope" value="Archaea"/>
</dbReference>
<dbReference type="HOGENOM" id="CLU_034626_0_0_2"/>
<dbReference type="OrthoDB" id="8643at2157"/>
<dbReference type="Proteomes" id="UP000001694">
    <property type="component" value="Chromosome"/>
</dbReference>
<dbReference type="GO" id="GO:0005737">
    <property type="term" value="C:cytoplasm"/>
    <property type="evidence" value="ECO:0007669"/>
    <property type="project" value="TreeGrafter"/>
</dbReference>
<dbReference type="GO" id="GO:0000428">
    <property type="term" value="C:DNA-directed RNA polymerase complex"/>
    <property type="evidence" value="ECO:0007669"/>
    <property type="project" value="UniProtKB-KW"/>
</dbReference>
<dbReference type="GO" id="GO:0000178">
    <property type="term" value="C:exosome (RNase complex)"/>
    <property type="evidence" value="ECO:0007669"/>
    <property type="project" value="UniProtKB-KW"/>
</dbReference>
<dbReference type="GO" id="GO:1990077">
    <property type="term" value="C:primosome complex"/>
    <property type="evidence" value="ECO:0007669"/>
    <property type="project" value="UniProtKB-KW"/>
</dbReference>
<dbReference type="GO" id="GO:0003899">
    <property type="term" value="F:DNA-directed RNA polymerase activity"/>
    <property type="evidence" value="ECO:0007669"/>
    <property type="project" value="InterPro"/>
</dbReference>
<dbReference type="GO" id="GO:0046872">
    <property type="term" value="F:metal ion binding"/>
    <property type="evidence" value="ECO:0007669"/>
    <property type="project" value="UniProtKB-KW"/>
</dbReference>
<dbReference type="GO" id="GO:0008143">
    <property type="term" value="F:poly(A) binding"/>
    <property type="evidence" value="ECO:0007669"/>
    <property type="project" value="InterPro"/>
</dbReference>
<dbReference type="GO" id="GO:0006269">
    <property type="term" value="P:DNA replication, synthesis of primer"/>
    <property type="evidence" value="ECO:0007669"/>
    <property type="project" value="UniProtKB-UniRule"/>
</dbReference>
<dbReference type="CDD" id="cd01029">
    <property type="entry name" value="TOPRIM_primases"/>
    <property type="match status" value="1"/>
</dbReference>
<dbReference type="FunFam" id="3.40.1360.10:FF:000010">
    <property type="entry name" value="DNA primase DnaG"/>
    <property type="match status" value="1"/>
</dbReference>
<dbReference type="Gene3D" id="3.40.1360.10">
    <property type="match status" value="1"/>
</dbReference>
<dbReference type="HAMAP" id="MF_00007">
    <property type="entry name" value="DNA_primase_DnaG_arc"/>
    <property type="match status" value="1"/>
</dbReference>
<dbReference type="InterPro" id="IPR050219">
    <property type="entry name" value="DnaG_primase"/>
</dbReference>
<dbReference type="InterPro" id="IPR020607">
    <property type="entry name" value="Primase_DnaG_arc"/>
</dbReference>
<dbReference type="InterPro" id="IPR034154">
    <property type="entry name" value="TOPRIM_DnaG/twinkle"/>
</dbReference>
<dbReference type="InterPro" id="IPR006171">
    <property type="entry name" value="TOPRIM_dom"/>
</dbReference>
<dbReference type="NCBIfam" id="NF003108">
    <property type="entry name" value="PRK04031.1-1"/>
    <property type="match status" value="1"/>
</dbReference>
<dbReference type="PANTHER" id="PTHR30313">
    <property type="entry name" value="DNA PRIMASE"/>
    <property type="match status" value="1"/>
</dbReference>
<dbReference type="PANTHER" id="PTHR30313:SF2">
    <property type="entry name" value="DNA PRIMASE"/>
    <property type="match status" value="1"/>
</dbReference>
<dbReference type="Pfam" id="PF13662">
    <property type="entry name" value="Toprim_4"/>
    <property type="match status" value="1"/>
</dbReference>
<dbReference type="SMART" id="SM00493">
    <property type="entry name" value="TOPRIM"/>
    <property type="match status" value="1"/>
</dbReference>
<dbReference type="SUPFAM" id="SSF56731">
    <property type="entry name" value="DNA primase core"/>
    <property type="match status" value="1"/>
</dbReference>
<dbReference type="PROSITE" id="PS50880">
    <property type="entry name" value="TOPRIM"/>
    <property type="match status" value="1"/>
</dbReference>
<gene>
    <name evidence="1" type="primary">dnaG</name>
    <name type="ordered locus">Tneu_1321</name>
</gene>
<accession>B1Y919</accession>
<name>DNAG_PYRNV</name>
<evidence type="ECO:0000255" key="1">
    <source>
        <dbReference type="HAMAP-Rule" id="MF_00007"/>
    </source>
</evidence>
<evidence type="ECO:0000256" key="2">
    <source>
        <dbReference type="SAM" id="MobiDB-lite"/>
    </source>
</evidence>
<reference key="1">
    <citation type="submission" date="2008-03" db="EMBL/GenBank/DDBJ databases">
        <title>Complete sequence of Thermoproteus neutrophilus V24Sta.</title>
        <authorList>
            <consortium name="US DOE Joint Genome Institute"/>
            <person name="Copeland A."/>
            <person name="Lucas S."/>
            <person name="Lapidus A."/>
            <person name="Glavina del Rio T."/>
            <person name="Dalin E."/>
            <person name="Tice H."/>
            <person name="Bruce D."/>
            <person name="Goodwin L."/>
            <person name="Pitluck S."/>
            <person name="Sims D."/>
            <person name="Brettin T."/>
            <person name="Detter J.C."/>
            <person name="Han C."/>
            <person name="Kuske C.R."/>
            <person name="Schmutz J."/>
            <person name="Larimer F."/>
            <person name="Land M."/>
            <person name="Hauser L."/>
            <person name="Kyrpides N."/>
            <person name="Mikhailova N."/>
            <person name="Biddle J.F."/>
            <person name="Zhang Z."/>
            <person name="Fitz-Gibbon S.T."/>
            <person name="Lowe T.M."/>
            <person name="Saltikov C."/>
            <person name="House C.H."/>
            <person name="Richardson P."/>
        </authorList>
    </citation>
    <scope>NUCLEOTIDE SEQUENCE [LARGE SCALE GENOMIC DNA]</scope>
    <source>
        <strain>DSM 2338 / JCM 9278 / NBRC 100436 / V24Sta</strain>
    </source>
</reference>
<organism>
    <name type="scientific">Pyrobaculum neutrophilum (strain DSM 2338 / JCM 9278 / NBRC 100436 / V24Sta)</name>
    <name type="common">Thermoproteus neutrophilus</name>
    <dbReference type="NCBI Taxonomy" id="444157"/>
    <lineage>
        <taxon>Archaea</taxon>
        <taxon>Thermoproteota</taxon>
        <taxon>Thermoprotei</taxon>
        <taxon>Thermoproteales</taxon>
        <taxon>Thermoproteaceae</taxon>
        <taxon>Pyrobaculum</taxon>
    </lineage>
</organism>
<sequence>MGALTIVAKYMIVAQIEVNGSVDKSDIIGALFSQTEGLLGKDMDLRELQMMGRIGRIEVDIFEKNSKTKAKIYIPSNLDRYETALVAALIESIERVGPYLANIKVLEIKDLREEKRRRIIEKAKELVKMIEEEILPDTKEIIEKLKEDVAKAEIVEYGPEKLPAGPDVEKSDSVIIVEGRADVVNLVKHGYRNVIAIEGISRGIPQTVIDLSKKKSVTVFIDGDKGGELVLRELLKVAHIDYIARAPPGKEVEQLTAKEIAKALRNKVTLEEWLAQQKAAGEKTEAPAQPTQQQPPPAEAPIQFPFDMSKKVEEMLGTLEAEIYDANWGLVKKLPVRELPDFLTGEGDSFYAIVMDGIVTQRIVDLAAKKGVKVIVTARVGPLTKVPEDMKIITFEKLTQKVA</sequence>
<comment type="function">
    <text evidence="1">RNA polymerase that catalyzes the synthesis of short RNA molecules used as primers for DNA polymerase during DNA replication. Also part of the exosome, which is a complex involved in RNA degradation. Acts as a poly(A)-binding protein that enhances the interaction between heteromeric, adenine-rich transcripts and the exosome.</text>
</comment>
<comment type="catalytic activity">
    <reaction evidence="1">
        <text>ssDNA + n NTP = ssDNA/pppN(pN)n-1 hybrid + (n-1) diphosphate.</text>
        <dbReference type="EC" id="2.7.7.101"/>
    </reaction>
</comment>
<comment type="cofactor">
    <cofactor evidence="1">
        <name>Mg(2+)</name>
        <dbReference type="ChEBI" id="CHEBI:18420"/>
    </cofactor>
    <text evidence="1">Binds two Mg(2+) per subunit.</text>
</comment>
<comment type="subunit">
    <text evidence="1">Forms a ternary complex with MCM helicase and DNA. Component of the archaeal exosome complex.</text>
</comment>
<comment type="similarity">
    <text evidence="1">Belongs to the archaeal DnaG primase family.</text>
</comment>
<keyword id="KW-0235">DNA replication</keyword>
<keyword id="KW-0240">DNA-directed RNA polymerase</keyword>
<keyword id="KW-0271">Exosome</keyword>
<keyword id="KW-0460">Magnesium</keyword>
<keyword id="KW-0479">Metal-binding</keyword>
<keyword id="KW-0548">Nucleotidyltransferase</keyword>
<keyword id="KW-0639">Primosome</keyword>
<keyword id="KW-0804">Transcription</keyword>
<keyword id="KW-0808">Transferase</keyword>
<feature type="chain" id="PRO_1000089138" description="DNA primase DnaG">
    <location>
        <begin position="1"/>
        <end position="403"/>
    </location>
</feature>
<feature type="domain" description="Toprim" evidence="1">
    <location>
        <begin position="172"/>
        <end position="248"/>
    </location>
</feature>
<feature type="region of interest" description="Disordered" evidence="2">
    <location>
        <begin position="279"/>
        <end position="300"/>
    </location>
</feature>
<feature type="binding site" evidence="1">
    <location>
        <position position="178"/>
    </location>
    <ligand>
        <name>Mg(2+)</name>
        <dbReference type="ChEBI" id="CHEBI:18420"/>
        <label>1</label>
        <note>catalytic</note>
    </ligand>
</feature>
<feature type="binding site" evidence="1">
    <location>
        <position position="222"/>
    </location>
    <ligand>
        <name>Mg(2+)</name>
        <dbReference type="ChEBI" id="CHEBI:18420"/>
        <label>1</label>
        <note>catalytic</note>
    </ligand>
</feature>
<feature type="binding site" evidence="1">
    <location>
        <position position="222"/>
    </location>
    <ligand>
        <name>Mg(2+)</name>
        <dbReference type="ChEBI" id="CHEBI:18420"/>
        <label>2</label>
    </ligand>
</feature>
<feature type="binding site" evidence="1">
    <location>
        <position position="224"/>
    </location>
    <ligand>
        <name>Mg(2+)</name>
        <dbReference type="ChEBI" id="CHEBI:18420"/>
        <label>2</label>
    </ligand>
</feature>